<feature type="chain" id="PRO_0000374577" description="tRNA-2-methylthio-N(6)-dimethylallyladenosine synthase">
    <location>
        <begin position="1"/>
        <end position="514"/>
    </location>
</feature>
<feature type="domain" description="MTTase N-terminal" evidence="1">
    <location>
        <begin position="68"/>
        <end position="186"/>
    </location>
</feature>
<feature type="domain" description="Radical SAM core" evidence="2">
    <location>
        <begin position="209"/>
        <end position="440"/>
    </location>
</feature>
<feature type="domain" description="TRAM" evidence="1">
    <location>
        <begin position="442"/>
        <end position="505"/>
    </location>
</feature>
<feature type="region of interest" description="Disordered" evidence="3">
    <location>
        <begin position="1"/>
        <end position="21"/>
    </location>
</feature>
<feature type="binding site" evidence="1">
    <location>
        <position position="77"/>
    </location>
    <ligand>
        <name>[4Fe-4S] cluster</name>
        <dbReference type="ChEBI" id="CHEBI:49883"/>
        <label>1</label>
    </ligand>
</feature>
<feature type="binding site" evidence="1">
    <location>
        <position position="113"/>
    </location>
    <ligand>
        <name>[4Fe-4S] cluster</name>
        <dbReference type="ChEBI" id="CHEBI:49883"/>
        <label>1</label>
    </ligand>
</feature>
<feature type="binding site" evidence="1">
    <location>
        <position position="147"/>
    </location>
    <ligand>
        <name>[4Fe-4S] cluster</name>
        <dbReference type="ChEBI" id="CHEBI:49883"/>
        <label>1</label>
    </ligand>
</feature>
<feature type="binding site" evidence="1">
    <location>
        <position position="223"/>
    </location>
    <ligand>
        <name>[4Fe-4S] cluster</name>
        <dbReference type="ChEBI" id="CHEBI:49883"/>
        <label>2</label>
        <note>4Fe-4S-S-AdoMet</note>
    </ligand>
</feature>
<feature type="binding site" evidence="1">
    <location>
        <position position="227"/>
    </location>
    <ligand>
        <name>[4Fe-4S] cluster</name>
        <dbReference type="ChEBI" id="CHEBI:49883"/>
        <label>2</label>
        <note>4Fe-4S-S-AdoMet</note>
    </ligand>
</feature>
<feature type="binding site" evidence="1">
    <location>
        <position position="230"/>
    </location>
    <ligand>
        <name>[4Fe-4S] cluster</name>
        <dbReference type="ChEBI" id="CHEBI:49883"/>
        <label>2</label>
        <note>4Fe-4S-S-AdoMet</note>
    </ligand>
</feature>
<sequence>MNEEQRKASSVDVLAERDKKAEKDYSKYFEHVYQPPNLKEAKKRGKQEVRYNRDFQIDEKYRGMGNERTFLIKTYGCQMNAHDTEVIAGILEALGYQATTDINTADVILINTCAIRENAENKVFSEIGNLKHLKKERPDILIGVCGCMSQEESVVNKILKSYQNVDMIFGTHNIHHLPEILEEAYLSKAMVVEVWSKEGDVIENLPKVREGNIKAWVNIMYGCDKFCTYCIVPFTRGKERSRRPEDIIDEVRELAREGYKEITLLGQNVNSYGKDLQDIEYDLGDLLQAISKIAIPRVRFTTSHPWDFTDHMIDVISEGGNIVPHIHLPVQSGNNAVLKIMGRKYTRESYLDLVKRIKDRIPNVALTTDIIVGYPNESEEQFEETLTLYDEVGFEHAYTYLYSQRDGTPAAKMKDNVPLNVKKERLQRLNKKVGHYSQIAMSKYEGQTVTVLCEGSSKKDDQVLAGYTDKNKLVNFKAPKEMIGKLVEVRIDEAKQYSLNGSFIKEVEPEMVIQ</sequence>
<name>MIAB_STAA3</name>
<organism>
    <name type="scientific">Staphylococcus aureus (strain USA300)</name>
    <dbReference type="NCBI Taxonomy" id="367830"/>
    <lineage>
        <taxon>Bacteria</taxon>
        <taxon>Bacillati</taxon>
        <taxon>Bacillota</taxon>
        <taxon>Bacilli</taxon>
        <taxon>Bacillales</taxon>
        <taxon>Staphylococcaceae</taxon>
        <taxon>Staphylococcus</taxon>
    </lineage>
</organism>
<gene>
    <name evidence="1" type="primary">miaB</name>
    <name type="ordered locus">SAUSA300_1185</name>
</gene>
<protein>
    <recommendedName>
        <fullName evidence="1">tRNA-2-methylthio-N(6)-dimethylallyladenosine synthase</fullName>
        <ecNumber evidence="1">2.8.4.3</ecNumber>
    </recommendedName>
    <alternativeName>
        <fullName evidence="1">(Dimethylallyl)adenosine tRNA methylthiotransferase MiaB</fullName>
    </alternativeName>
    <alternativeName>
        <fullName evidence="1">tRNA-i(6)A37 methylthiotransferase</fullName>
    </alternativeName>
</protein>
<dbReference type="EC" id="2.8.4.3" evidence="1"/>
<dbReference type="EMBL" id="CP000255">
    <property type="protein sequence ID" value="ABD21270.1"/>
    <property type="molecule type" value="Genomic_DNA"/>
</dbReference>
<dbReference type="RefSeq" id="WP_001001523.1">
    <property type="nucleotide sequence ID" value="NZ_CP027476.1"/>
</dbReference>
<dbReference type="SMR" id="Q2FHE6"/>
<dbReference type="KEGG" id="saa:SAUSA300_1185"/>
<dbReference type="HOGENOM" id="CLU_018697_2_0_9"/>
<dbReference type="OMA" id="CEHFHIP"/>
<dbReference type="Proteomes" id="UP000001939">
    <property type="component" value="Chromosome"/>
</dbReference>
<dbReference type="GO" id="GO:0005829">
    <property type="term" value="C:cytosol"/>
    <property type="evidence" value="ECO:0007669"/>
    <property type="project" value="TreeGrafter"/>
</dbReference>
<dbReference type="GO" id="GO:0051539">
    <property type="term" value="F:4 iron, 4 sulfur cluster binding"/>
    <property type="evidence" value="ECO:0007669"/>
    <property type="project" value="UniProtKB-UniRule"/>
</dbReference>
<dbReference type="GO" id="GO:0046872">
    <property type="term" value="F:metal ion binding"/>
    <property type="evidence" value="ECO:0007669"/>
    <property type="project" value="UniProtKB-KW"/>
</dbReference>
<dbReference type="GO" id="GO:0035597">
    <property type="term" value="F:N6-isopentenyladenosine methylthiotransferase activity"/>
    <property type="evidence" value="ECO:0007669"/>
    <property type="project" value="TreeGrafter"/>
</dbReference>
<dbReference type="CDD" id="cd01335">
    <property type="entry name" value="Radical_SAM"/>
    <property type="match status" value="1"/>
</dbReference>
<dbReference type="FunFam" id="3.40.50.12160:FF:000006">
    <property type="entry name" value="tRNA-2-methylthio-N(6)-dimethylallyladenosine synthase"/>
    <property type="match status" value="1"/>
</dbReference>
<dbReference type="FunFam" id="3.80.30.20:FF:000001">
    <property type="entry name" value="tRNA-2-methylthio-N(6)-dimethylallyladenosine synthase 2"/>
    <property type="match status" value="1"/>
</dbReference>
<dbReference type="Gene3D" id="3.40.50.12160">
    <property type="entry name" value="Methylthiotransferase, N-terminal domain"/>
    <property type="match status" value="1"/>
</dbReference>
<dbReference type="Gene3D" id="3.80.30.20">
    <property type="entry name" value="tm_1862 like domain"/>
    <property type="match status" value="1"/>
</dbReference>
<dbReference type="HAMAP" id="MF_01864">
    <property type="entry name" value="tRNA_metthiotr_MiaB"/>
    <property type="match status" value="1"/>
</dbReference>
<dbReference type="InterPro" id="IPR006638">
    <property type="entry name" value="Elp3/MiaA/NifB-like_rSAM"/>
</dbReference>
<dbReference type="InterPro" id="IPR005839">
    <property type="entry name" value="Methylthiotransferase"/>
</dbReference>
<dbReference type="InterPro" id="IPR020612">
    <property type="entry name" value="Methylthiotransferase_CS"/>
</dbReference>
<dbReference type="InterPro" id="IPR013848">
    <property type="entry name" value="Methylthiotransferase_N"/>
</dbReference>
<dbReference type="InterPro" id="IPR038135">
    <property type="entry name" value="Methylthiotransferase_N_sf"/>
</dbReference>
<dbReference type="InterPro" id="IPR006463">
    <property type="entry name" value="MiaB_methiolase"/>
</dbReference>
<dbReference type="InterPro" id="IPR007197">
    <property type="entry name" value="rSAM"/>
</dbReference>
<dbReference type="InterPro" id="IPR023404">
    <property type="entry name" value="rSAM_horseshoe"/>
</dbReference>
<dbReference type="InterPro" id="IPR002792">
    <property type="entry name" value="TRAM_dom"/>
</dbReference>
<dbReference type="NCBIfam" id="TIGR01574">
    <property type="entry name" value="miaB-methiolase"/>
    <property type="match status" value="1"/>
</dbReference>
<dbReference type="NCBIfam" id="TIGR00089">
    <property type="entry name" value="MiaB/RimO family radical SAM methylthiotransferase"/>
    <property type="match status" value="1"/>
</dbReference>
<dbReference type="PANTHER" id="PTHR43020">
    <property type="entry name" value="CDK5 REGULATORY SUBUNIT-ASSOCIATED PROTEIN 1"/>
    <property type="match status" value="1"/>
</dbReference>
<dbReference type="PANTHER" id="PTHR43020:SF2">
    <property type="entry name" value="MITOCHONDRIAL TRNA METHYLTHIOTRANSFERASE CDK5RAP1"/>
    <property type="match status" value="1"/>
</dbReference>
<dbReference type="Pfam" id="PF04055">
    <property type="entry name" value="Radical_SAM"/>
    <property type="match status" value="1"/>
</dbReference>
<dbReference type="Pfam" id="PF01938">
    <property type="entry name" value="TRAM"/>
    <property type="match status" value="1"/>
</dbReference>
<dbReference type="Pfam" id="PF00919">
    <property type="entry name" value="UPF0004"/>
    <property type="match status" value="1"/>
</dbReference>
<dbReference type="SFLD" id="SFLDF00273">
    <property type="entry name" value="(dimethylallyl)adenosine_tRNA"/>
    <property type="match status" value="1"/>
</dbReference>
<dbReference type="SFLD" id="SFLDG01082">
    <property type="entry name" value="B12-binding_domain_containing"/>
    <property type="match status" value="1"/>
</dbReference>
<dbReference type="SFLD" id="SFLDS00029">
    <property type="entry name" value="Radical_SAM"/>
    <property type="match status" value="1"/>
</dbReference>
<dbReference type="SMART" id="SM00729">
    <property type="entry name" value="Elp3"/>
    <property type="match status" value="1"/>
</dbReference>
<dbReference type="SUPFAM" id="SSF102114">
    <property type="entry name" value="Radical SAM enzymes"/>
    <property type="match status" value="1"/>
</dbReference>
<dbReference type="PROSITE" id="PS51449">
    <property type="entry name" value="MTTASE_N"/>
    <property type="match status" value="1"/>
</dbReference>
<dbReference type="PROSITE" id="PS01278">
    <property type="entry name" value="MTTASE_RADICAL"/>
    <property type="match status" value="1"/>
</dbReference>
<dbReference type="PROSITE" id="PS51918">
    <property type="entry name" value="RADICAL_SAM"/>
    <property type="match status" value="1"/>
</dbReference>
<dbReference type="PROSITE" id="PS50926">
    <property type="entry name" value="TRAM"/>
    <property type="match status" value="1"/>
</dbReference>
<keyword id="KW-0004">4Fe-4S</keyword>
<keyword id="KW-0963">Cytoplasm</keyword>
<keyword id="KW-0408">Iron</keyword>
<keyword id="KW-0411">Iron-sulfur</keyword>
<keyword id="KW-0479">Metal-binding</keyword>
<keyword id="KW-0949">S-adenosyl-L-methionine</keyword>
<keyword id="KW-0808">Transferase</keyword>
<keyword id="KW-0819">tRNA processing</keyword>
<proteinExistence type="inferred from homology"/>
<comment type="function">
    <text evidence="1">Catalyzes the methylthiolation of N6-(dimethylallyl)adenosine (i(6)A), leading to the formation of 2-methylthio-N6-(dimethylallyl)adenosine (ms(2)i(6)A) at position 37 in tRNAs that read codons beginning with uridine.</text>
</comment>
<comment type="catalytic activity">
    <reaction evidence="1">
        <text>N(6)-dimethylallyladenosine(37) in tRNA + (sulfur carrier)-SH + AH2 + 2 S-adenosyl-L-methionine = 2-methylsulfanyl-N(6)-dimethylallyladenosine(37) in tRNA + (sulfur carrier)-H + 5'-deoxyadenosine + L-methionine + A + S-adenosyl-L-homocysteine + 2 H(+)</text>
        <dbReference type="Rhea" id="RHEA:37067"/>
        <dbReference type="Rhea" id="RHEA-COMP:10375"/>
        <dbReference type="Rhea" id="RHEA-COMP:10376"/>
        <dbReference type="Rhea" id="RHEA-COMP:14737"/>
        <dbReference type="Rhea" id="RHEA-COMP:14739"/>
        <dbReference type="ChEBI" id="CHEBI:13193"/>
        <dbReference type="ChEBI" id="CHEBI:15378"/>
        <dbReference type="ChEBI" id="CHEBI:17319"/>
        <dbReference type="ChEBI" id="CHEBI:17499"/>
        <dbReference type="ChEBI" id="CHEBI:29917"/>
        <dbReference type="ChEBI" id="CHEBI:57844"/>
        <dbReference type="ChEBI" id="CHEBI:57856"/>
        <dbReference type="ChEBI" id="CHEBI:59789"/>
        <dbReference type="ChEBI" id="CHEBI:64428"/>
        <dbReference type="ChEBI" id="CHEBI:74415"/>
        <dbReference type="ChEBI" id="CHEBI:74417"/>
        <dbReference type="EC" id="2.8.4.3"/>
    </reaction>
</comment>
<comment type="cofactor">
    <cofactor evidence="1">
        <name>[4Fe-4S] cluster</name>
        <dbReference type="ChEBI" id="CHEBI:49883"/>
    </cofactor>
    <text evidence="1">Binds 2 [4Fe-4S] clusters. One cluster is coordinated with 3 cysteines and an exchangeable S-adenosyl-L-methionine.</text>
</comment>
<comment type="subunit">
    <text evidence="1">Monomer.</text>
</comment>
<comment type="subcellular location">
    <subcellularLocation>
        <location evidence="1">Cytoplasm</location>
    </subcellularLocation>
</comment>
<comment type="similarity">
    <text evidence="1">Belongs to the methylthiotransferase family. MiaB subfamily.</text>
</comment>
<accession>Q2FHE6</accession>
<evidence type="ECO:0000255" key="1">
    <source>
        <dbReference type="HAMAP-Rule" id="MF_01864"/>
    </source>
</evidence>
<evidence type="ECO:0000255" key="2">
    <source>
        <dbReference type="PROSITE-ProRule" id="PRU01266"/>
    </source>
</evidence>
<evidence type="ECO:0000256" key="3">
    <source>
        <dbReference type="SAM" id="MobiDB-lite"/>
    </source>
</evidence>
<reference key="1">
    <citation type="journal article" date="2006" name="Lancet">
        <title>Complete genome sequence of USA300, an epidemic clone of community-acquired meticillin-resistant Staphylococcus aureus.</title>
        <authorList>
            <person name="Diep B.A."/>
            <person name="Gill S.R."/>
            <person name="Chang R.F."/>
            <person name="Phan T.H."/>
            <person name="Chen J.H."/>
            <person name="Davidson M.G."/>
            <person name="Lin F."/>
            <person name="Lin J."/>
            <person name="Carleton H.A."/>
            <person name="Mongodin E.F."/>
            <person name="Sensabaugh G.F."/>
            <person name="Perdreau-Remington F."/>
        </authorList>
    </citation>
    <scope>NUCLEOTIDE SEQUENCE [LARGE SCALE GENOMIC DNA]</scope>
    <source>
        <strain>USA300</strain>
    </source>
</reference>